<sequence>MKRLVLISLVLAAGCSTVPPTNVHQPMTARPSPRFEMANGNGSIYQAASSRPLFEDRRARFVGDTITVKITESTTASTKSNNKVDQSNAQKYGLGASTGMFGRVLPGAMDMSASSSTAFSGKGEAANNNIFTGNMTVTVIDVMPNGNLLVSGEKQVAIGSEQEFVRISGVVNPSFVDAFNVVDSSKIADARIEYKSSGQVSDGQVMGWLARFFLNVMPF</sequence>
<keyword id="KW-0975">Bacterial flagellum</keyword>
<keyword id="KW-0998">Cell outer membrane</keyword>
<keyword id="KW-0449">Lipoprotein</keyword>
<keyword id="KW-0472">Membrane</keyword>
<keyword id="KW-0564">Palmitate</keyword>
<keyword id="KW-0732">Signal</keyword>
<comment type="function">
    <text evidence="1">Assembles around the rod to form the L-ring and probably protects the motor/basal body from shearing forces during rotation.</text>
</comment>
<comment type="subunit">
    <text evidence="1">The basal body constitutes a major portion of the flagellar organelle and consists of four rings (L,P,S, and M) mounted on a central rod.</text>
</comment>
<comment type="subcellular location">
    <subcellularLocation>
        <location evidence="1">Cell outer membrane</location>
        <topology evidence="1">Lipid-anchor</topology>
    </subcellularLocation>
    <subcellularLocation>
        <location evidence="1">Bacterial flagellum basal body</location>
    </subcellularLocation>
</comment>
<comment type="similarity">
    <text evidence="1">Belongs to the FlgH family.</text>
</comment>
<proteinExistence type="inferred from homology"/>
<accession>Q47I20</accession>
<protein>
    <recommendedName>
        <fullName evidence="1">Flagellar L-ring protein</fullName>
    </recommendedName>
    <alternativeName>
        <fullName evidence="1">Basal body L-ring protein</fullName>
    </alternativeName>
</protein>
<feature type="signal peptide" evidence="1">
    <location>
        <begin position="1"/>
        <end position="14"/>
    </location>
</feature>
<feature type="chain" id="PRO_0000236820" description="Flagellar L-ring protein">
    <location>
        <begin position="15"/>
        <end position="219"/>
    </location>
</feature>
<feature type="lipid moiety-binding region" description="N-palmitoyl cysteine" evidence="1">
    <location>
        <position position="15"/>
    </location>
</feature>
<feature type="lipid moiety-binding region" description="S-diacylglycerol cysteine" evidence="1">
    <location>
        <position position="15"/>
    </location>
</feature>
<evidence type="ECO:0000255" key="1">
    <source>
        <dbReference type="HAMAP-Rule" id="MF_00415"/>
    </source>
</evidence>
<dbReference type="EMBL" id="CP000089">
    <property type="protein sequence ID" value="AAZ45511.1"/>
    <property type="molecule type" value="Genomic_DNA"/>
</dbReference>
<dbReference type="SMR" id="Q47I20"/>
<dbReference type="STRING" id="159087.Daro_0755"/>
<dbReference type="KEGG" id="dar:Daro_0755"/>
<dbReference type="eggNOG" id="COG2063">
    <property type="taxonomic scope" value="Bacteria"/>
</dbReference>
<dbReference type="HOGENOM" id="CLU_069313_0_0_4"/>
<dbReference type="OrthoDB" id="9789463at2"/>
<dbReference type="GO" id="GO:0009427">
    <property type="term" value="C:bacterial-type flagellum basal body, distal rod, L ring"/>
    <property type="evidence" value="ECO:0007669"/>
    <property type="project" value="InterPro"/>
</dbReference>
<dbReference type="GO" id="GO:0009279">
    <property type="term" value="C:cell outer membrane"/>
    <property type="evidence" value="ECO:0007669"/>
    <property type="project" value="UniProtKB-SubCell"/>
</dbReference>
<dbReference type="GO" id="GO:0003774">
    <property type="term" value="F:cytoskeletal motor activity"/>
    <property type="evidence" value="ECO:0007669"/>
    <property type="project" value="InterPro"/>
</dbReference>
<dbReference type="GO" id="GO:0071973">
    <property type="term" value="P:bacterial-type flagellum-dependent cell motility"/>
    <property type="evidence" value="ECO:0007669"/>
    <property type="project" value="InterPro"/>
</dbReference>
<dbReference type="HAMAP" id="MF_00415">
    <property type="entry name" value="FlgH"/>
    <property type="match status" value="1"/>
</dbReference>
<dbReference type="InterPro" id="IPR000527">
    <property type="entry name" value="Flag_Lring"/>
</dbReference>
<dbReference type="PANTHER" id="PTHR34933">
    <property type="entry name" value="FLAGELLAR L-RING PROTEIN"/>
    <property type="match status" value="1"/>
</dbReference>
<dbReference type="PANTHER" id="PTHR34933:SF3">
    <property type="entry name" value="FLAGELLAR L-RING PROTEIN"/>
    <property type="match status" value="1"/>
</dbReference>
<dbReference type="Pfam" id="PF02107">
    <property type="entry name" value="FlgH"/>
    <property type="match status" value="1"/>
</dbReference>
<dbReference type="PRINTS" id="PR01008">
    <property type="entry name" value="FLGLRINGFLGH"/>
</dbReference>
<dbReference type="PROSITE" id="PS51257">
    <property type="entry name" value="PROKAR_LIPOPROTEIN"/>
    <property type="match status" value="1"/>
</dbReference>
<organism>
    <name type="scientific">Dechloromonas aromatica (strain RCB)</name>
    <dbReference type="NCBI Taxonomy" id="159087"/>
    <lineage>
        <taxon>Bacteria</taxon>
        <taxon>Pseudomonadati</taxon>
        <taxon>Pseudomonadota</taxon>
        <taxon>Betaproteobacteria</taxon>
        <taxon>Rhodocyclales</taxon>
        <taxon>Azonexaceae</taxon>
        <taxon>Dechloromonas</taxon>
    </lineage>
</organism>
<name>FLGH_DECAR</name>
<reference key="1">
    <citation type="journal article" date="2009" name="BMC Genomics">
        <title>Metabolic analysis of the soil microbe Dechloromonas aromatica str. RCB: indications of a surprisingly complex life-style and cryptic anaerobic pathways for aromatic degradation.</title>
        <authorList>
            <person name="Salinero K.K."/>
            <person name="Keller K."/>
            <person name="Feil W.S."/>
            <person name="Feil H."/>
            <person name="Trong S."/>
            <person name="Di Bartolo G."/>
            <person name="Lapidus A."/>
        </authorList>
    </citation>
    <scope>NUCLEOTIDE SEQUENCE [LARGE SCALE GENOMIC DNA]</scope>
    <source>
        <strain>RCB</strain>
    </source>
</reference>
<gene>
    <name evidence="1" type="primary">flgH</name>
    <name type="ordered locus">Daro_0755</name>
</gene>